<feature type="chain" id="PRO_1000191577" description="Endonuclease V">
    <location>
        <begin position="1"/>
        <end position="222"/>
    </location>
</feature>
<feature type="binding site" evidence="1">
    <location>
        <position position="34"/>
    </location>
    <ligand>
        <name>Mg(2+)</name>
        <dbReference type="ChEBI" id="CHEBI:18420"/>
    </ligand>
</feature>
<feature type="binding site" evidence="1">
    <location>
        <position position="102"/>
    </location>
    <ligand>
        <name>Mg(2+)</name>
        <dbReference type="ChEBI" id="CHEBI:18420"/>
    </ligand>
</feature>
<feature type="site" description="Interaction with target DNA" evidence="1">
    <location>
        <position position="72"/>
    </location>
</feature>
<proteinExistence type="inferred from homology"/>
<accession>B4EYT7</accession>
<keyword id="KW-0963">Cytoplasm</keyword>
<keyword id="KW-0227">DNA damage</keyword>
<keyword id="KW-0234">DNA repair</keyword>
<keyword id="KW-0255">Endonuclease</keyword>
<keyword id="KW-0378">Hydrolase</keyword>
<keyword id="KW-0460">Magnesium</keyword>
<keyword id="KW-0479">Metal-binding</keyword>
<keyword id="KW-0540">Nuclease</keyword>
<keyword id="KW-1185">Reference proteome</keyword>
<comment type="function">
    <text evidence="1">DNA repair enzyme involved in the repair of deaminated bases. Selectively cleaves double-stranded DNA at the second phosphodiester bond 3' to a deoxyinosine leaving behind the intact lesion on the nicked DNA.</text>
</comment>
<comment type="catalytic activity">
    <reaction evidence="1">
        <text>Endonucleolytic cleavage at apurinic or apyrimidinic sites to products with a 5'-phosphate.</text>
        <dbReference type="EC" id="3.1.21.7"/>
    </reaction>
</comment>
<comment type="cofactor">
    <cofactor evidence="1">
        <name>Mg(2+)</name>
        <dbReference type="ChEBI" id="CHEBI:18420"/>
    </cofactor>
</comment>
<comment type="subcellular location">
    <subcellularLocation>
        <location evidence="1">Cytoplasm</location>
    </subcellularLocation>
</comment>
<comment type="similarity">
    <text evidence="1">Belongs to the endonuclease V family.</text>
</comment>
<name>NFI_PROMH</name>
<sequence length="222" mass="24995">MINTQQLRQEQTEKAQQIILTDQFMAPTYIAGADVGFENSGAVTRAAIVVMHYPSFEIVEYQIARIATLLPYIPGLLSFRECPALLKAWQGIKQKPQLVFVDGQGIAHPRRLGVASHFGLLADIPTIGVAKSRLCGDDKKLDDDVGSTEKLMDKDEQLGWIYRSKKRCKPLYISPGYKVSMESALAWVKRCINGYRLPEPTRWADGIASNRRLFEQLNKNKL</sequence>
<protein>
    <recommendedName>
        <fullName evidence="1">Endonuclease V</fullName>
        <ecNumber evidence="1">3.1.21.7</ecNumber>
    </recommendedName>
    <alternativeName>
        <fullName evidence="1">Deoxyinosine 3'endonuclease</fullName>
    </alternativeName>
    <alternativeName>
        <fullName evidence="1">Deoxyribonuclease V</fullName>
        <shortName evidence="1">DNase V</shortName>
    </alternativeName>
</protein>
<organism>
    <name type="scientific">Proteus mirabilis (strain HI4320)</name>
    <dbReference type="NCBI Taxonomy" id="529507"/>
    <lineage>
        <taxon>Bacteria</taxon>
        <taxon>Pseudomonadati</taxon>
        <taxon>Pseudomonadota</taxon>
        <taxon>Gammaproteobacteria</taxon>
        <taxon>Enterobacterales</taxon>
        <taxon>Morganellaceae</taxon>
        <taxon>Proteus</taxon>
    </lineage>
</organism>
<evidence type="ECO:0000255" key="1">
    <source>
        <dbReference type="HAMAP-Rule" id="MF_00801"/>
    </source>
</evidence>
<dbReference type="EC" id="3.1.21.7" evidence="1"/>
<dbReference type="EMBL" id="AM942759">
    <property type="protein sequence ID" value="CAR45474.1"/>
    <property type="molecule type" value="Genomic_DNA"/>
</dbReference>
<dbReference type="RefSeq" id="WP_012368503.1">
    <property type="nucleotide sequence ID" value="NC_010554.1"/>
</dbReference>
<dbReference type="SMR" id="B4EYT7"/>
<dbReference type="EnsemblBacteria" id="CAR45474">
    <property type="protein sequence ID" value="CAR45474"/>
    <property type="gene ID" value="PMI2773"/>
</dbReference>
<dbReference type="GeneID" id="6801125"/>
<dbReference type="KEGG" id="pmr:PMI2773"/>
<dbReference type="eggNOG" id="COG1515">
    <property type="taxonomic scope" value="Bacteria"/>
</dbReference>
<dbReference type="HOGENOM" id="CLU_047631_1_0_6"/>
<dbReference type="Proteomes" id="UP000008319">
    <property type="component" value="Chromosome"/>
</dbReference>
<dbReference type="GO" id="GO:0005737">
    <property type="term" value="C:cytoplasm"/>
    <property type="evidence" value="ECO:0007669"/>
    <property type="project" value="UniProtKB-SubCell"/>
</dbReference>
<dbReference type="GO" id="GO:0043737">
    <property type="term" value="F:deoxyribonuclease V activity"/>
    <property type="evidence" value="ECO:0007669"/>
    <property type="project" value="UniProtKB-UniRule"/>
</dbReference>
<dbReference type="GO" id="GO:0000287">
    <property type="term" value="F:magnesium ion binding"/>
    <property type="evidence" value="ECO:0007669"/>
    <property type="project" value="UniProtKB-UniRule"/>
</dbReference>
<dbReference type="GO" id="GO:0016891">
    <property type="term" value="F:RNA endonuclease activity, producing 5'-phosphomonoesters"/>
    <property type="evidence" value="ECO:0007669"/>
    <property type="project" value="TreeGrafter"/>
</dbReference>
<dbReference type="GO" id="GO:0003727">
    <property type="term" value="F:single-stranded RNA binding"/>
    <property type="evidence" value="ECO:0007669"/>
    <property type="project" value="TreeGrafter"/>
</dbReference>
<dbReference type="GO" id="GO:0006281">
    <property type="term" value="P:DNA repair"/>
    <property type="evidence" value="ECO:0007669"/>
    <property type="project" value="UniProtKB-UniRule"/>
</dbReference>
<dbReference type="CDD" id="cd06559">
    <property type="entry name" value="Endonuclease_V"/>
    <property type="match status" value="1"/>
</dbReference>
<dbReference type="FunFam" id="3.30.2170.10:FF:000001">
    <property type="entry name" value="Endonuclease V"/>
    <property type="match status" value="1"/>
</dbReference>
<dbReference type="Gene3D" id="3.30.2170.10">
    <property type="entry name" value="archaeoglobus fulgidus dsm 4304 superfamily"/>
    <property type="match status" value="1"/>
</dbReference>
<dbReference type="HAMAP" id="MF_00801">
    <property type="entry name" value="Endonuclease_5"/>
    <property type="match status" value="1"/>
</dbReference>
<dbReference type="InterPro" id="IPR007581">
    <property type="entry name" value="Endonuclease-V"/>
</dbReference>
<dbReference type="NCBIfam" id="NF008629">
    <property type="entry name" value="PRK11617.1"/>
    <property type="match status" value="1"/>
</dbReference>
<dbReference type="PANTHER" id="PTHR28511">
    <property type="entry name" value="ENDONUCLEASE V"/>
    <property type="match status" value="1"/>
</dbReference>
<dbReference type="PANTHER" id="PTHR28511:SF1">
    <property type="entry name" value="ENDONUCLEASE V"/>
    <property type="match status" value="1"/>
</dbReference>
<dbReference type="Pfam" id="PF04493">
    <property type="entry name" value="Endonuclease_5"/>
    <property type="match status" value="1"/>
</dbReference>
<reference key="1">
    <citation type="journal article" date="2008" name="J. Bacteriol.">
        <title>Complete genome sequence of uropathogenic Proteus mirabilis, a master of both adherence and motility.</title>
        <authorList>
            <person name="Pearson M.M."/>
            <person name="Sebaihia M."/>
            <person name="Churcher C."/>
            <person name="Quail M.A."/>
            <person name="Seshasayee A.S."/>
            <person name="Luscombe N.M."/>
            <person name="Abdellah Z."/>
            <person name="Arrosmith C."/>
            <person name="Atkin B."/>
            <person name="Chillingworth T."/>
            <person name="Hauser H."/>
            <person name="Jagels K."/>
            <person name="Moule S."/>
            <person name="Mungall K."/>
            <person name="Norbertczak H."/>
            <person name="Rabbinowitsch E."/>
            <person name="Walker D."/>
            <person name="Whithead S."/>
            <person name="Thomson N.R."/>
            <person name="Rather P.N."/>
            <person name="Parkhill J."/>
            <person name="Mobley H.L.T."/>
        </authorList>
    </citation>
    <scope>NUCLEOTIDE SEQUENCE [LARGE SCALE GENOMIC DNA]</scope>
    <source>
        <strain>HI4320</strain>
    </source>
</reference>
<gene>
    <name evidence="1" type="primary">nfi</name>
    <name type="ordered locus">PMI2773</name>
</gene>